<reference key="1">
    <citation type="journal article" date="2009" name="PLoS ONE">
        <title>The complete genome of Teredinibacter turnerae T7901: an intracellular endosymbiont of marine wood-boring bivalves (shipworms).</title>
        <authorList>
            <person name="Yang J.C."/>
            <person name="Madupu R."/>
            <person name="Durkin A.S."/>
            <person name="Ekborg N.A."/>
            <person name="Pedamallu C.S."/>
            <person name="Hostetler J.B."/>
            <person name="Radune D."/>
            <person name="Toms B.S."/>
            <person name="Henrissat B."/>
            <person name="Coutinho P.M."/>
            <person name="Schwarz S."/>
            <person name="Field L."/>
            <person name="Trindade-Silva A.E."/>
            <person name="Soares C.A.G."/>
            <person name="Elshahawi S."/>
            <person name="Hanora A."/>
            <person name="Schmidt E.W."/>
            <person name="Haygood M.G."/>
            <person name="Posfai J."/>
            <person name="Benner J."/>
            <person name="Madinger C."/>
            <person name="Nove J."/>
            <person name="Anton B."/>
            <person name="Chaudhary K."/>
            <person name="Foster J."/>
            <person name="Holman A."/>
            <person name="Kumar S."/>
            <person name="Lessard P.A."/>
            <person name="Luyten Y.A."/>
            <person name="Slatko B."/>
            <person name="Wood N."/>
            <person name="Wu B."/>
            <person name="Teplitski M."/>
            <person name="Mougous J.D."/>
            <person name="Ward N."/>
            <person name="Eisen J.A."/>
            <person name="Badger J.H."/>
            <person name="Distel D.L."/>
        </authorList>
    </citation>
    <scope>NUCLEOTIDE SEQUENCE [LARGE SCALE GENOMIC DNA]</scope>
    <source>
        <strain>ATCC 39867 / T7901</strain>
    </source>
</reference>
<feature type="chain" id="PRO_1000202657" description="Phosphomethylpyrimidine synthase">
    <location>
        <begin position="1"/>
        <end position="639"/>
    </location>
</feature>
<feature type="region of interest" description="Disordered" evidence="2">
    <location>
        <begin position="49"/>
        <end position="71"/>
    </location>
</feature>
<feature type="binding site" evidence="1">
    <location>
        <position position="231"/>
    </location>
    <ligand>
        <name>substrate</name>
    </ligand>
</feature>
<feature type="binding site" evidence="1">
    <location>
        <position position="260"/>
    </location>
    <ligand>
        <name>substrate</name>
    </ligand>
</feature>
<feature type="binding site" evidence="1">
    <location>
        <position position="289"/>
    </location>
    <ligand>
        <name>substrate</name>
    </ligand>
</feature>
<feature type="binding site" evidence="1">
    <location>
        <position position="325"/>
    </location>
    <ligand>
        <name>substrate</name>
    </ligand>
</feature>
<feature type="binding site" evidence="1">
    <location>
        <begin position="345"/>
        <end position="347"/>
    </location>
    <ligand>
        <name>substrate</name>
    </ligand>
</feature>
<feature type="binding site" evidence="1">
    <location>
        <begin position="386"/>
        <end position="389"/>
    </location>
    <ligand>
        <name>substrate</name>
    </ligand>
</feature>
<feature type="binding site" evidence="1">
    <location>
        <position position="425"/>
    </location>
    <ligand>
        <name>substrate</name>
    </ligand>
</feature>
<feature type="binding site" evidence="1">
    <location>
        <position position="429"/>
    </location>
    <ligand>
        <name>Zn(2+)</name>
        <dbReference type="ChEBI" id="CHEBI:29105"/>
    </ligand>
</feature>
<feature type="binding site" evidence="1">
    <location>
        <position position="452"/>
    </location>
    <ligand>
        <name>substrate</name>
    </ligand>
</feature>
<feature type="binding site" evidence="1">
    <location>
        <position position="493"/>
    </location>
    <ligand>
        <name>Zn(2+)</name>
        <dbReference type="ChEBI" id="CHEBI:29105"/>
    </ligand>
</feature>
<feature type="binding site" evidence="1">
    <location>
        <position position="573"/>
    </location>
    <ligand>
        <name>[4Fe-4S] cluster</name>
        <dbReference type="ChEBI" id="CHEBI:49883"/>
        <note>4Fe-4S-S-AdoMet</note>
    </ligand>
</feature>
<feature type="binding site" evidence="1">
    <location>
        <position position="576"/>
    </location>
    <ligand>
        <name>[4Fe-4S] cluster</name>
        <dbReference type="ChEBI" id="CHEBI:49883"/>
        <note>4Fe-4S-S-AdoMet</note>
    </ligand>
</feature>
<feature type="binding site" evidence="1">
    <location>
        <position position="581"/>
    </location>
    <ligand>
        <name>[4Fe-4S] cluster</name>
        <dbReference type="ChEBI" id="CHEBI:49883"/>
        <note>4Fe-4S-S-AdoMet</note>
    </ligand>
</feature>
<keyword id="KW-0004">4Fe-4S</keyword>
<keyword id="KW-0408">Iron</keyword>
<keyword id="KW-0411">Iron-sulfur</keyword>
<keyword id="KW-0456">Lyase</keyword>
<keyword id="KW-0479">Metal-binding</keyword>
<keyword id="KW-1185">Reference proteome</keyword>
<keyword id="KW-0949">S-adenosyl-L-methionine</keyword>
<keyword id="KW-0784">Thiamine biosynthesis</keyword>
<keyword id="KW-0862">Zinc</keyword>
<proteinExistence type="inferred from homology"/>
<gene>
    <name evidence="1" type="primary">thiC</name>
    <name type="ordered locus">TERTU_3924</name>
</gene>
<dbReference type="EC" id="4.1.99.17" evidence="1"/>
<dbReference type="EMBL" id="CP001614">
    <property type="protein sequence ID" value="ACR14599.1"/>
    <property type="molecule type" value="Genomic_DNA"/>
</dbReference>
<dbReference type="RefSeq" id="WP_015820713.1">
    <property type="nucleotide sequence ID" value="NC_012997.1"/>
</dbReference>
<dbReference type="SMR" id="C5BTK7"/>
<dbReference type="STRING" id="377629.TERTU_3924"/>
<dbReference type="KEGG" id="ttu:TERTU_3924"/>
<dbReference type="eggNOG" id="COG0422">
    <property type="taxonomic scope" value="Bacteria"/>
</dbReference>
<dbReference type="HOGENOM" id="CLU_013181_2_1_6"/>
<dbReference type="OrthoDB" id="9805897at2"/>
<dbReference type="UniPathway" id="UPA00060"/>
<dbReference type="Proteomes" id="UP000009080">
    <property type="component" value="Chromosome"/>
</dbReference>
<dbReference type="GO" id="GO:0005829">
    <property type="term" value="C:cytosol"/>
    <property type="evidence" value="ECO:0007669"/>
    <property type="project" value="TreeGrafter"/>
</dbReference>
<dbReference type="GO" id="GO:0051539">
    <property type="term" value="F:4 iron, 4 sulfur cluster binding"/>
    <property type="evidence" value="ECO:0007669"/>
    <property type="project" value="UniProtKB-KW"/>
</dbReference>
<dbReference type="GO" id="GO:0016830">
    <property type="term" value="F:carbon-carbon lyase activity"/>
    <property type="evidence" value="ECO:0007669"/>
    <property type="project" value="InterPro"/>
</dbReference>
<dbReference type="GO" id="GO:0008270">
    <property type="term" value="F:zinc ion binding"/>
    <property type="evidence" value="ECO:0007669"/>
    <property type="project" value="UniProtKB-UniRule"/>
</dbReference>
<dbReference type="GO" id="GO:0009228">
    <property type="term" value="P:thiamine biosynthetic process"/>
    <property type="evidence" value="ECO:0007669"/>
    <property type="project" value="UniProtKB-KW"/>
</dbReference>
<dbReference type="GO" id="GO:0009229">
    <property type="term" value="P:thiamine diphosphate biosynthetic process"/>
    <property type="evidence" value="ECO:0007669"/>
    <property type="project" value="UniProtKB-UniRule"/>
</dbReference>
<dbReference type="FunFam" id="3.20.20.540:FF:000001">
    <property type="entry name" value="Phosphomethylpyrimidine synthase"/>
    <property type="match status" value="1"/>
</dbReference>
<dbReference type="Gene3D" id="6.10.250.620">
    <property type="match status" value="1"/>
</dbReference>
<dbReference type="Gene3D" id="3.20.20.540">
    <property type="entry name" value="Radical SAM ThiC family, central domain"/>
    <property type="match status" value="1"/>
</dbReference>
<dbReference type="HAMAP" id="MF_00089">
    <property type="entry name" value="ThiC"/>
    <property type="match status" value="1"/>
</dbReference>
<dbReference type="InterPro" id="IPR037509">
    <property type="entry name" value="ThiC"/>
</dbReference>
<dbReference type="InterPro" id="IPR025747">
    <property type="entry name" value="ThiC-associated_dom"/>
</dbReference>
<dbReference type="InterPro" id="IPR038521">
    <property type="entry name" value="ThiC/Bza_core_dom"/>
</dbReference>
<dbReference type="InterPro" id="IPR002817">
    <property type="entry name" value="ThiC/BzaA/B"/>
</dbReference>
<dbReference type="NCBIfam" id="NF006763">
    <property type="entry name" value="PRK09284.1"/>
    <property type="match status" value="1"/>
</dbReference>
<dbReference type="NCBIfam" id="NF009895">
    <property type="entry name" value="PRK13352.1"/>
    <property type="match status" value="1"/>
</dbReference>
<dbReference type="NCBIfam" id="TIGR00190">
    <property type="entry name" value="thiC"/>
    <property type="match status" value="1"/>
</dbReference>
<dbReference type="PANTHER" id="PTHR30557:SF1">
    <property type="entry name" value="PHOSPHOMETHYLPYRIMIDINE SYNTHASE, CHLOROPLASTIC"/>
    <property type="match status" value="1"/>
</dbReference>
<dbReference type="PANTHER" id="PTHR30557">
    <property type="entry name" value="THIAMINE BIOSYNTHESIS PROTEIN THIC"/>
    <property type="match status" value="1"/>
</dbReference>
<dbReference type="Pfam" id="PF13667">
    <property type="entry name" value="ThiC-associated"/>
    <property type="match status" value="1"/>
</dbReference>
<dbReference type="Pfam" id="PF01964">
    <property type="entry name" value="ThiC_Rad_SAM"/>
    <property type="match status" value="1"/>
</dbReference>
<dbReference type="SFLD" id="SFLDF00407">
    <property type="entry name" value="phosphomethylpyrimidine_syntha"/>
    <property type="match status" value="1"/>
</dbReference>
<dbReference type="SFLD" id="SFLDG01114">
    <property type="entry name" value="phosphomethylpyrimidine_syntha"/>
    <property type="match status" value="1"/>
</dbReference>
<dbReference type="SFLD" id="SFLDS00113">
    <property type="entry name" value="Radical_SAM_Phosphomethylpyrim"/>
    <property type="match status" value="1"/>
</dbReference>
<evidence type="ECO:0000255" key="1">
    <source>
        <dbReference type="HAMAP-Rule" id="MF_00089"/>
    </source>
</evidence>
<evidence type="ECO:0000256" key="2">
    <source>
        <dbReference type="SAM" id="MobiDB-lite"/>
    </source>
</evidence>
<name>THIC_TERTT</name>
<accession>C5BTK7</accession>
<comment type="function">
    <text evidence="1">Catalyzes the synthesis of the hydroxymethylpyrimidine phosphate (HMP-P) moiety of thiamine from aminoimidazole ribotide (AIR) in a radical S-adenosyl-L-methionine (SAM)-dependent reaction.</text>
</comment>
<comment type="catalytic activity">
    <reaction evidence="1">
        <text>5-amino-1-(5-phospho-beta-D-ribosyl)imidazole + S-adenosyl-L-methionine = 4-amino-2-methyl-5-(phosphooxymethyl)pyrimidine + CO + 5'-deoxyadenosine + formate + L-methionine + 3 H(+)</text>
        <dbReference type="Rhea" id="RHEA:24840"/>
        <dbReference type="ChEBI" id="CHEBI:15378"/>
        <dbReference type="ChEBI" id="CHEBI:15740"/>
        <dbReference type="ChEBI" id="CHEBI:17245"/>
        <dbReference type="ChEBI" id="CHEBI:17319"/>
        <dbReference type="ChEBI" id="CHEBI:57844"/>
        <dbReference type="ChEBI" id="CHEBI:58354"/>
        <dbReference type="ChEBI" id="CHEBI:59789"/>
        <dbReference type="ChEBI" id="CHEBI:137981"/>
        <dbReference type="EC" id="4.1.99.17"/>
    </reaction>
</comment>
<comment type="cofactor">
    <cofactor evidence="1">
        <name>[4Fe-4S] cluster</name>
        <dbReference type="ChEBI" id="CHEBI:49883"/>
    </cofactor>
    <text evidence="1">Binds 1 [4Fe-4S] cluster per subunit. The cluster is coordinated with 3 cysteines and an exchangeable S-adenosyl-L-methionine.</text>
</comment>
<comment type="pathway">
    <text evidence="1">Cofactor biosynthesis; thiamine diphosphate biosynthesis.</text>
</comment>
<comment type="subunit">
    <text evidence="1">Homodimer.</text>
</comment>
<comment type="similarity">
    <text evidence="1">Belongs to the ThiC family.</text>
</comment>
<protein>
    <recommendedName>
        <fullName evidence="1">Phosphomethylpyrimidine synthase</fullName>
        <ecNumber evidence="1">4.1.99.17</ecNumber>
    </recommendedName>
    <alternativeName>
        <fullName evidence="1">Hydroxymethylpyrimidine phosphate synthase</fullName>
        <shortName evidence="1">HMP-P synthase</shortName>
        <shortName evidence="1">HMP-phosphate synthase</shortName>
        <shortName evidence="1">HMPP synthase</shortName>
    </alternativeName>
    <alternativeName>
        <fullName evidence="1">Thiamine biosynthesis protein ThiC</fullName>
    </alternativeName>
</protein>
<sequence>MAANEKTYLSETAKVDQSSVQPFPNSSKIYVEGSRSDIRVPMREISLADTPTDFGGEQNRPVRVYDTSGPYTDPEVQIDLRTGLPDVRSRWINERGDTEALAEKSSLFATQRLNDPALASLRFQHLRTPRRAKSGANVSQMHYARQGIITPEMEYIAIRENMSLQQAREQGVLQEQHAGQAFGAAIPDEITPEFVRSEVARGRAIIPANINHPELEPMIIGRNFLVKINGNIGNSALGSSIEEEVAKLTWGTRWGADTIMDLSTGKNIHETREWIIRNASVPIGTVPIYQALEKVDGIAEDLTWDIFRDTLIEQAEQGVDYFTIHAGVLLRYVPLTAKRVTGIVSRGGSIMAKWCLAHHQENFLYTHFEDICEIMKAYDVSFSLGDGLRPGSIADANDEAQFGELETLGELTKIAWQHDVQTMIEGPGHVPMQMIKENMDKQLRECGEAPFYTLGPLTTDIAPGYDHITSGIGAAMIGWYGCAMLCYVTPKEHLGLPNKDDVKEGIITYKIAAHAADLAKGHPGAQIRDNALSKARFEFRWEDQFNLGLDPDTARAYHDETLPKESAKVAHFCSMCGPKFCSMKITQEVRDYAAEHGTEITPRAPGEAEEVVRMVDVEAEMQKKSDEFRAQGSEIYSKV</sequence>
<organism>
    <name type="scientific">Teredinibacter turnerae (strain ATCC 39867 / T7901)</name>
    <dbReference type="NCBI Taxonomy" id="377629"/>
    <lineage>
        <taxon>Bacteria</taxon>
        <taxon>Pseudomonadati</taxon>
        <taxon>Pseudomonadota</taxon>
        <taxon>Gammaproteobacteria</taxon>
        <taxon>Cellvibrionales</taxon>
        <taxon>Cellvibrionaceae</taxon>
        <taxon>Teredinibacter</taxon>
    </lineage>
</organism>